<feature type="chain" id="PRO_0000324649" description="Zinc finger CCCH domain-containing protein 15 homolog">
    <location>
        <begin position="1"/>
        <end position="373"/>
    </location>
</feature>
<feature type="zinc finger region" description="C3H1-type 1" evidence="2">
    <location>
        <begin position="95"/>
        <end position="123"/>
    </location>
</feature>
<feature type="zinc finger region" description="C3H1-type 2" evidence="2">
    <location>
        <begin position="167"/>
        <end position="205"/>
    </location>
</feature>
<feature type="region of interest" description="Disordered" evidence="3">
    <location>
        <begin position="1"/>
        <end position="27"/>
    </location>
</feature>
<feature type="region of interest" description="Disordered" evidence="3">
    <location>
        <begin position="325"/>
        <end position="373"/>
    </location>
</feature>
<feature type="coiled-coil region" evidence="1">
    <location>
        <begin position="252"/>
        <end position="326"/>
    </location>
</feature>
<feature type="compositionally biased region" description="Basic and acidic residues" evidence="3">
    <location>
        <begin position="10"/>
        <end position="25"/>
    </location>
</feature>
<feature type="compositionally biased region" description="Acidic residues" evidence="3">
    <location>
        <begin position="335"/>
        <end position="373"/>
    </location>
</feature>
<dbReference type="EMBL" id="AAFI02000190">
    <property type="protein sequence ID" value="EAL61184.1"/>
    <property type="molecule type" value="Genomic_DNA"/>
</dbReference>
<dbReference type="RefSeq" id="XP_629591.1">
    <property type="nucleotide sequence ID" value="XM_629589.1"/>
</dbReference>
<dbReference type="SMR" id="Q54DA5"/>
<dbReference type="FunCoup" id="Q54DA5">
    <property type="interactions" value="1087"/>
</dbReference>
<dbReference type="STRING" id="44689.Q54DA5"/>
<dbReference type="PaxDb" id="44689-DDB0237482"/>
<dbReference type="EnsemblProtists" id="EAL61184">
    <property type="protein sequence ID" value="EAL61184"/>
    <property type="gene ID" value="DDB_G0292410"/>
</dbReference>
<dbReference type="GeneID" id="8628651"/>
<dbReference type="KEGG" id="ddi:DDB_G0292410"/>
<dbReference type="dictyBase" id="DDB_G0292410"/>
<dbReference type="VEuPathDB" id="AmoebaDB:DDB_G0292410"/>
<dbReference type="eggNOG" id="KOG1763">
    <property type="taxonomic scope" value="Eukaryota"/>
</dbReference>
<dbReference type="HOGENOM" id="CLU_042870_0_0_1"/>
<dbReference type="InParanoid" id="Q54DA5"/>
<dbReference type="OMA" id="GREMFYF"/>
<dbReference type="PhylomeDB" id="Q54DA5"/>
<dbReference type="Reactome" id="R-DDI-9629569">
    <property type="pathway name" value="Protein hydroxylation"/>
</dbReference>
<dbReference type="PRO" id="PR:Q54DA5"/>
<dbReference type="Proteomes" id="UP000002195">
    <property type="component" value="Chromosome 6"/>
</dbReference>
<dbReference type="GO" id="GO:0005829">
    <property type="term" value="C:cytosol"/>
    <property type="evidence" value="ECO:0000318"/>
    <property type="project" value="GO_Central"/>
</dbReference>
<dbReference type="GO" id="GO:0008270">
    <property type="term" value="F:zinc ion binding"/>
    <property type="evidence" value="ECO:0007669"/>
    <property type="project" value="UniProtKB-KW"/>
</dbReference>
<dbReference type="GO" id="GO:0002181">
    <property type="term" value="P:cytoplasmic translation"/>
    <property type="evidence" value="ECO:0000318"/>
    <property type="project" value="GO_Central"/>
</dbReference>
<dbReference type="Gene3D" id="6.20.400.10">
    <property type="match status" value="1"/>
</dbReference>
<dbReference type="Gene3D" id="4.10.1000.10">
    <property type="entry name" value="Zinc finger, CCCH-type"/>
    <property type="match status" value="1"/>
</dbReference>
<dbReference type="InterPro" id="IPR032378">
    <property type="entry name" value="ZC3H15/TMA46_C"/>
</dbReference>
<dbReference type="InterPro" id="IPR000571">
    <property type="entry name" value="Znf_CCCH"/>
</dbReference>
<dbReference type="InterPro" id="IPR036855">
    <property type="entry name" value="Znf_CCCH_sf"/>
</dbReference>
<dbReference type="PANTHER" id="PTHR12681:SF0">
    <property type="entry name" value="ZINC FINGER CCCH DOMAIN-CONTAINING PROTEIN 15"/>
    <property type="match status" value="1"/>
</dbReference>
<dbReference type="PANTHER" id="PTHR12681">
    <property type="entry name" value="ZINC FINGER-CONTAINING PROTEIN P48ZNF"/>
    <property type="match status" value="1"/>
</dbReference>
<dbReference type="Pfam" id="PF16543">
    <property type="entry name" value="DFRP_C"/>
    <property type="match status" value="1"/>
</dbReference>
<dbReference type="Pfam" id="PF00642">
    <property type="entry name" value="zf-CCCH"/>
    <property type="match status" value="1"/>
</dbReference>
<dbReference type="SMART" id="SM00356">
    <property type="entry name" value="ZnF_C3H1"/>
    <property type="match status" value="2"/>
</dbReference>
<dbReference type="SUPFAM" id="SSF90229">
    <property type="entry name" value="CCCH zinc finger"/>
    <property type="match status" value="1"/>
</dbReference>
<dbReference type="PROSITE" id="PS50103">
    <property type="entry name" value="ZF_C3H1"/>
    <property type="match status" value="2"/>
</dbReference>
<name>ZC3HF_DICDI</name>
<protein>
    <recommendedName>
        <fullName>Zinc finger CCCH domain-containing protein 15 homolog</fullName>
    </recommendedName>
</protein>
<sequence>MPPKQAQSKKTVEKEKKKKVEDKTFGLKNKNKSKKVAAYVSQVEAQVKHSGLQNKEAALKEKAKRDKELAEKAKKEAESILVNTIVQSKVPLGVDPKSIVCEYFKQGVTCPKGNRCKFAHDLAAGRKSEKIDIYTDRRKDEDTMENWDEAKLKSVVEKKRTTENKAKPTAIICKFFLDAIESKKYGWFWECPNGGEKCAYQHCLPEGYQLKKKKSREEDEVEEIPIEELIEEERAKLTKSTPVTLETFLRWKEEKRLQKEKAAKDAQDKRLADIKAGKTSMSGREMFVFNPDLFVDDESAIDTKSKEYEKSEEEIAALANQINTSLFTDGGVLPSDDDDDDDDDDDDDEDGDDEEEDDDEEEGEYEEEEASDE</sequence>
<organism>
    <name type="scientific">Dictyostelium discoideum</name>
    <name type="common">Social amoeba</name>
    <dbReference type="NCBI Taxonomy" id="44689"/>
    <lineage>
        <taxon>Eukaryota</taxon>
        <taxon>Amoebozoa</taxon>
        <taxon>Evosea</taxon>
        <taxon>Eumycetozoa</taxon>
        <taxon>Dictyostelia</taxon>
        <taxon>Dictyosteliales</taxon>
        <taxon>Dictyosteliaceae</taxon>
        <taxon>Dictyostelium</taxon>
    </lineage>
</organism>
<comment type="similarity">
    <text evidence="4">Belongs to the ZC3H15/TMA46 family.</text>
</comment>
<evidence type="ECO:0000255" key="1"/>
<evidence type="ECO:0000255" key="2">
    <source>
        <dbReference type="PROSITE-ProRule" id="PRU00723"/>
    </source>
</evidence>
<evidence type="ECO:0000256" key="3">
    <source>
        <dbReference type="SAM" id="MobiDB-lite"/>
    </source>
</evidence>
<evidence type="ECO:0000305" key="4"/>
<gene>
    <name type="ORF">DDB_G0292410</name>
</gene>
<reference key="1">
    <citation type="journal article" date="2005" name="Nature">
        <title>The genome of the social amoeba Dictyostelium discoideum.</title>
        <authorList>
            <person name="Eichinger L."/>
            <person name="Pachebat J.A."/>
            <person name="Gloeckner G."/>
            <person name="Rajandream M.A."/>
            <person name="Sucgang R."/>
            <person name="Berriman M."/>
            <person name="Song J."/>
            <person name="Olsen R."/>
            <person name="Szafranski K."/>
            <person name="Xu Q."/>
            <person name="Tunggal B."/>
            <person name="Kummerfeld S."/>
            <person name="Madera M."/>
            <person name="Konfortov B.A."/>
            <person name="Rivero F."/>
            <person name="Bankier A.T."/>
            <person name="Lehmann R."/>
            <person name="Hamlin N."/>
            <person name="Davies R."/>
            <person name="Gaudet P."/>
            <person name="Fey P."/>
            <person name="Pilcher K."/>
            <person name="Chen G."/>
            <person name="Saunders D."/>
            <person name="Sodergren E.J."/>
            <person name="Davis P."/>
            <person name="Kerhornou A."/>
            <person name="Nie X."/>
            <person name="Hall N."/>
            <person name="Anjard C."/>
            <person name="Hemphill L."/>
            <person name="Bason N."/>
            <person name="Farbrother P."/>
            <person name="Desany B."/>
            <person name="Just E."/>
            <person name="Morio T."/>
            <person name="Rost R."/>
            <person name="Churcher C.M."/>
            <person name="Cooper J."/>
            <person name="Haydock S."/>
            <person name="van Driessche N."/>
            <person name="Cronin A."/>
            <person name="Goodhead I."/>
            <person name="Muzny D.M."/>
            <person name="Mourier T."/>
            <person name="Pain A."/>
            <person name="Lu M."/>
            <person name="Harper D."/>
            <person name="Lindsay R."/>
            <person name="Hauser H."/>
            <person name="James K.D."/>
            <person name="Quiles M."/>
            <person name="Madan Babu M."/>
            <person name="Saito T."/>
            <person name="Buchrieser C."/>
            <person name="Wardroper A."/>
            <person name="Felder M."/>
            <person name="Thangavelu M."/>
            <person name="Johnson D."/>
            <person name="Knights A."/>
            <person name="Loulseged H."/>
            <person name="Mungall K.L."/>
            <person name="Oliver K."/>
            <person name="Price C."/>
            <person name="Quail M.A."/>
            <person name="Urushihara H."/>
            <person name="Hernandez J."/>
            <person name="Rabbinowitsch E."/>
            <person name="Steffen D."/>
            <person name="Sanders M."/>
            <person name="Ma J."/>
            <person name="Kohara Y."/>
            <person name="Sharp S."/>
            <person name="Simmonds M.N."/>
            <person name="Spiegler S."/>
            <person name="Tivey A."/>
            <person name="Sugano S."/>
            <person name="White B."/>
            <person name="Walker D."/>
            <person name="Woodward J.R."/>
            <person name="Winckler T."/>
            <person name="Tanaka Y."/>
            <person name="Shaulsky G."/>
            <person name="Schleicher M."/>
            <person name="Weinstock G.M."/>
            <person name="Rosenthal A."/>
            <person name="Cox E.C."/>
            <person name="Chisholm R.L."/>
            <person name="Gibbs R.A."/>
            <person name="Loomis W.F."/>
            <person name="Platzer M."/>
            <person name="Kay R.R."/>
            <person name="Williams J.G."/>
            <person name="Dear P.H."/>
            <person name="Noegel A.A."/>
            <person name="Barrell B.G."/>
            <person name="Kuspa A."/>
        </authorList>
    </citation>
    <scope>NUCLEOTIDE SEQUENCE [LARGE SCALE GENOMIC DNA]</scope>
    <source>
        <strain>AX4</strain>
    </source>
</reference>
<keyword id="KW-0175">Coiled coil</keyword>
<keyword id="KW-0479">Metal-binding</keyword>
<keyword id="KW-1185">Reference proteome</keyword>
<keyword id="KW-0677">Repeat</keyword>
<keyword id="KW-0862">Zinc</keyword>
<keyword id="KW-0863">Zinc-finger</keyword>
<accession>Q54DA5</accession>
<proteinExistence type="inferred from homology"/>